<sequence>MEPIYPFARPQMNTRFPSSRMVPFHFPPSKCALWNPTPTGDFIYLHLSYYRNPKLVVTEKTIRLAYRHAKQNKKNSSCFLLGSLTADEDEEGVTLTVDRFDPGREVPECLEITPTASLPGDFLIPCKVHTQELCSREMIVHSVDDFSSALKALQCHICSKDSLDCGKLLSLRVHITSRESLDSVEFDLHWAAVTLANNFKCTPVKPIPIIPTALARNLSSNLNISQVQGTYKYGYLTMDETRKLLLLLESDPKVYSLPLVGIWLSGITHIYSPQVWACCLRYIFNSSVQERVFSESGNFIIVLYSMTHKEPEFYECFPCDGKIPDFRFQLLTSKETLHLFKNVEPPDKNPIRCELSAESQNAETEFFSKASKNFSIKRSSQKLSSGKMPIHDHDSGVEDEDFSPRPIPSPHPVSQKISKIQPSVPELSLVLDGNFIESNPLPTPLEMVNNENPPLINHLEHLKPLQPQLYDEKHSPEVEAGEPSLRGIPNQLNQDKPALLRHCKVRQPPAYKKGNPHTRNSIKPSSHNGPSHDIFEKLQTVSAGNVQNEEYPIRPSTLNSRQSSLAPQSQPHDFVFSPHNSGRPMELQIPTPPLPSYCSTNVCRCCQHHSHIQYSPLNSWQGANTVGSIQDVQSEALQKHSLFHPSGCPALYCNAFCSSSSPIALRPQGDMGSCSPHSNIEPSPVARPPSHMDLCNPQPCTVCMHTPKTESDNGMMGLSPDAYRFLTEQDRQLRLLQAQIQRLLEAQSLMPCSPKTTAVEDTVQAGRQMELVSVEAQSSPGLHMRKGVSIAVSTGASLFWNAAGEDQEPDSQMKQDDTKISSEDMNFSVDINNEVTSLPGSASSLKAVDIPSFEESNIAVEEEFNQPLSVSNSSLVVRKEPDVPVFFPSGQLAESVSMCLQTGPTGGASNNSETSEEPKIEHVMQPLLHQPSDNQKIYQDLLGQVNHLLNSSSKETEQPSTKAVIISHECTRTQNVYHTKKKTHHSRLVDKDCVLNATLKQLRSLGVKIDSPTKVKKNAHNVDHASVLACISPEAVISGLNCMSFANVGMSGLSPNGVDLSMEANAIALKYLNENQLSQLSVTRSNQNNCDPFSLLHINTDRSTVGLSLISPNNMSFATKKYMKRYGLLQSSDNSEDEEEPPDNADSKSEYLLNQNLRSIPEQLGGQKEPSKNDHEIINCSNCESVGTNADTPVLRNITNEVLQTKAKQQLTEKPAFLVKNLKPSPAVNLRTGKAEFTQHPEKENEGDITIFPESLQPSETLKQMNSMNSVGTFLDVKRLRQLPKLF</sequence>
<dbReference type="EMBL" id="M74558">
    <property type="protein sequence ID" value="AAA60550.1"/>
    <property type="molecule type" value="mRNA"/>
</dbReference>
<dbReference type="EMBL" id="AF349657">
    <property type="protein sequence ID" value="AAK51418.1"/>
    <property type="molecule type" value="Genomic_DNA"/>
</dbReference>
<dbReference type="EMBL" id="AF349642">
    <property type="protein sequence ID" value="AAK51418.1"/>
    <property type="status" value="JOINED"/>
    <property type="molecule type" value="Genomic_DNA"/>
</dbReference>
<dbReference type="EMBL" id="AF349643">
    <property type="protein sequence ID" value="AAK51418.1"/>
    <property type="status" value="JOINED"/>
    <property type="molecule type" value="Genomic_DNA"/>
</dbReference>
<dbReference type="EMBL" id="AF349645">
    <property type="protein sequence ID" value="AAK51418.1"/>
    <property type="status" value="JOINED"/>
    <property type="molecule type" value="Genomic_DNA"/>
</dbReference>
<dbReference type="EMBL" id="AF349647">
    <property type="protein sequence ID" value="AAK51418.1"/>
    <property type="status" value="JOINED"/>
    <property type="molecule type" value="Genomic_DNA"/>
</dbReference>
<dbReference type="EMBL" id="AF349649">
    <property type="protein sequence ID" value="AAK51418.1"/>
    <property type="status" value="JOINED"/>
    <property type="molecule type" value="Genomic_DNA"/>
</dbReference>
<dbReference type="EMBL" id="AF349651">
    <property type="protein sequence ID" value="AAK51418.1"/>
    <property type="status" value="JOINED"/>
    <property type="molecule type" value="Genomic_DNA"/>
</dbReference>
<dbReference type="EMBL" id="AF349653">
    <property type="protein sequence ID" value="AAK51418.1"/>
    <property type="status" value="JOINED"/>
    <property type="molecule type" value="Genomic_DNA"/>
</dbReference>
<dbReference type="EMBL" id="AF349656">
    <property type="protein sequence ID" value="AAK51418.1"/>
    <property type="status" value="JOINED"/>
    <property type="molecule type" value="Genomic_DNA"/>
</dbReference>
<dbReference type="EMBL" id="AF349655">
    <property type="protein sequence ID" value="AAK51418.1"/>
    <property type="status" value="JOINED"/>
    <property type="molecule type" value="Genomic_DNA"/>
</dbReference>
<dbReference type="EMBL" id="AF349654">
    <property type="protein sequence ID" value="AAK51418.1"/>
    <property type="status" value="JOINED"/>
    <property type="molecule type" value="Genomic_DNA"/>
</dbReference>
<dbReference type="EMBL" id="AF349652">
    <property type="protein sequence ID" value="AAK51418.1"/>
    <property type="status" value="JOINED"/>
    <property type="molecule type" value="Genomic_DNA"/>
</dbReference>
<dbReference type="EMBL" id="AF349650">
    <property type="protein sequence ID" value="AAK51418.1"/>
    <property type="status" value="JOINED"/>
    <property type="molecule type" value="Genomic_DNA"/>
</dbReference>
<dbReference type="EMBL" id="AF349648">
    <property type="protein sequence ID" value="AAK51418.1"/>
    <property type="status" value="JOINED"/>
    <property type="molecule type" value="Genomic_DNA"/>
</dbReference>
<dbReference type="EMBL" id="AF349646">
    <property type="protein sequence ID" value="AAK51418.1"/>
    <property type="status" value="JOINED"/>
    <property type="molecule type" value="Genomic_DNA"/>
</dbReference>
<dbReference type="EMBL" id="AF349644">
    <property type="protein sequence ID" value="AAK51418.1"/>
    <property type="status" value="JOINED"/>
    <property type="molecule type" value="Genomic_DNA"/>
</dbReference>
<dbReference type="EMBL" id="CR749851">
    <property type="protein sequence ID" value="CAH18699.1"/>
    <property type="molecule type" value="mRNA"/>
</dbReference>
<dbReference type="EMBL" id="AL513322">
    <property type="protein sequence ID" value="CAI13468.1"/>
    <property type="molecule type" value="Genomic_DNA"/>
</dbReference>
<dbReference type="EMBL" id="AL135960">
    <property type="protein sequence ID" value="CAI13468.1"/>
    <property type="status" value="JOINED"/>
    <property type="molecule type" value="Genomic_DNA"/>
</dbReference>
<dbReference type="EMBL" id="AL135960">
    <property type="protein sequence ID" value="CAI19733.1"/>
    <property type="molecule type" value="Genomic_DNA"/>
</dbReference>
<dbReference type="EMBL" id="AL513322">
    <property type="protein sequence ID" value="CAI19733.1"/>
    <property type="status" value="JOINED"/>
    <property type="molecule type" value="Genomic_DNA"/>
</dbReference>
<dbReference type="EMBL" id="BC126223">
    <property type="protein sequence ID" value="AAI26224.1"/>
    <property type="molecule type" value="mRNA"/>
</dbReference>
<dbReference type="CCDS" id="CCDS41329.1">
    <molecule id="Q15468-2"/>
</dbReference>
<dbReference type="CCDS" id="CCDS548.1">
    <molecule id="Q15468-1"/>
</dbReference>
<dbReference type="PIR" id="A41685">
    <property type="entry name" value="A41685"/>
</dbReference>
<dbReference type="RefSeq" id="NP_001041631.1">
    <molecule id="Q15468-2"/>
    <property type="nucleotide sequence ID" value="NM_001048166.1"/>
</dbReference>
<dbReference type="RefSeq" id="NP_001269865.1">
    <molecule id="Q15468-1"/>
    <property type="nucleotide sequence ID" value="NM_001282936.1"/>
</dbReference>
<dbReference type="RefSeq" id="NP_001269866.1">
    <property type="nucleotide sequence ID" value="NM_001282937.1"/>
</dbReference>
<dbReference type="RefSeq" id="NP_001269867.1">
    <property type="nucleotide sequence ID" value="NM_001282938.1"/>
</dbReference>
<dbReference type="RefSeq" id="NP_001269868.1">
    <property type="nucleotide sequence ID" value="NM_001282939.1"/>
</dbReference>
<dbReference type="RefSeq" id="NP_003026.2">
    <molecule id="Q15468-1"/>
    <property type="nucleotide sequence ID" value="NM_003035.2"/>
</dbReference>
<dbReference type="RefSeq" id="XP_006710897.1">
    <molecule id="Q15468-2"/>
    <property type="nucleotide sequence ID" value="XM_006710834.4"/>
</dbReference>
<dbReference type="RefSeq" id="XP_011540293.1">
    <molecule id="Q15468-2"/>
    <property type="nucleotide sequence ID" value="XM_011541991.3"/>
</dbReference>
<dbReference type="RefSeq" id="XP_011540294.1">
    <molecule id="Q15468-2"/>
    <property type="nucleotide sequence ID" value="XM_011541992.3"/>
</dbReference>
<dbReference type="RefSeq" id="XP_047284256.1">
    <molecule id="Q15468-2"/>
    <property type="nucleotide sequence ID" value="XM_047428300.1"/>
</dbReference>
<dbReference type="RefSeq" id="XP_047284260.1">
    <molecule id="Q15468-2"/>
    <property type="nucleotide sequence ID" value="XM_047428304.1"/>
</dbReference>
<dbReference type="RefSeq" id="XP_047284266.1">
    <molecule id="Q15468-2"/>
    <property type="nucleotide sequence ID" value="XM_047428310.1"/>
</dbReference>
<dbReference type="RefSeq" id="XP_047284268.1">
    <molecule id="Q15468-2"/>
    <property type="nucleotide sequence ID" value="XM_047428312.1"/>
</dbReference>
<dbReference type="RefSeq" id="XP_047284270.1">
    <molecule id="Q15468-1"/>
    <property type="nucleotide sequence ID" value="XM_047428314.1"/>
</dbReference>
<dbReference type="RefSeq" id="XP_047284272.1">
    <molecule id="Q15468-1"/>
    <property type="nucleotide sequence ID" value="XM_047428316.1"/>
</dbReference>
<dbReference type="RefSeq" id="XP_047284273.1">
    <molecule id="Q15468-1"/>
    <property type="nucleotide sequence ID" value="XM_047428317.1"/>
</dbReference>
<dbReference type="RefSeq" id="XP_047284276.1">
    <molecule id="Q15468-1"/>
    <property type="nucleotide sequence ID" value="XM_047428320.1"/>
</dbReference>
<dbReference type="RefSeq" id="XP_054194317.1">
    <molecule id="Q15468-2"/>
    <property type="nucleotide sequence ID" value="XM_054338342.1"/>
</dbReference>
<dbReference type="RefSeq" id="XP_054194318.1">
    <molecule id="Q15468-2"/>
    <property type="nucleotide sequence ID" value="XM_054338343.1"/>
</dbReference>
<dbReference type="RefSeq" id="XP_054194319.1">
    <molecule id="Q15468-2"/>
    <property type="nucleotide sequence ID" value="XM_054338344.1"/>
</dbReference>
<dbReference type="RefSeq" id="XP_054194320.1">
    <molecule id="Q15468-2"/>
    <property type="nucleotide sequence ID" value="XM_054338345.1"/>
</dbReference>
<dbReference type="RefSeq" id="XP_054194321.1">
    <molecule id="Q15468-2"/>
    <property type="nucleotide sequence ID" value="XM_054338346.1"/>
</dbReference>
<dbReference type="RefSeq" id="XP_054194322.1">
    <molecule id="Q15468-2"/>
    <property type="nucleotide sequence ID" value="XM_054338347.1"/>
</dbReference>
<dbReference type="RefSeq" id="XP_054194323.1">
    <molecule id="Q15468-2"/>
    <property type="nucleotide sequence ID" value="XM_054338348.1"/>
</dbReference>
<dbReference type="RefSeq" id="XP_054194324.1">
    <molecule id="Q15468-2"/>
    <property type="nucleotide sequence ID" value="XM_054338349.1"/>
</dbReference>
<dbReference type="RefSeq" id="XP_054194325.1">
    <molecule id="Q15468-1"/>
    <property type="nucleotide sequence ID" value="XM_054338350.1"/>
</dbReference>
<dbReference type="RefSeq" id="XP_054194326.1">
    <molecule id="Q15468-1"/>
    <property type="nucleotide sequence ID" value="XM_054338351.1"/>
</dbReference>
<dbReference type="RefSeq" id="XP_054194327.1">
    <molecule id="Q15468-1"/>
    <property type="nucleotide sequence ID" value="XM_054338352.1"/>
</dbReference>
<dbReference type="RefSeq" id="XP_054194328.1">
    <molecule id="Q15468-1"/>
    <property type="nucleotide sequence ID" value="XM_054338353.1"/>
</dbReference>
<dbReference type="RefSeq" id="XP_054194329.1">
    <molecule id="Q15468-1"/>
    <property type="nucleotide sequence ID" value="XM_054338354.1"/>
</dbReference>
<dbReference type="PDB" id="4YYP">
    <property type="method" value="X-ray"/>
    <property type="resolution" value="2.60 A"/>
    <property type="chains" value="B=720-751"/>
</dbReference>
<dbReference type="PDB" id="5LHW">
    <property type="method" value="X-ray"/>
    <property type="resolution" value="0.91 A"/>
    <property type="chains" value="A=726-750"/>
</dbReference>
<dbReference type="PDB" id="5LHZ">
    <property type="method" value="X-ray"/>
    <property type="resolution" value="2.51 A"/>
    <property type="chains" value="D/E/F=726-750"/>
</dbReference>
<dbReference type="PDB" id="8OYK">
    <property type="method" value="X-ray"/>
    <property type="resolution" value="1.65 A"/>
    <property type="chains" value="A=718-749"/>
</dbReference>
<dbReference type="PDB" id="8OYL">
    <property type="method" value="X-ray"/>
    <property type="resolution" value="1.67 A"/>
    <property type="chains" value="A/B/C/D/E/F=718-749"/>
</dbReference>
<dbReference type="PDBsum" id="4YYP"/>
<dbReference type="PDBsum" id="5LHW"/>
<dbReference type="PDBsum" id="5LHZ"/>
<dbReference type="PDBsum" id="8OYK"/>
<dbReference type="PDBsum" id="8OYL"/>
<dbReference type="SMR" id="Q15468"/>
<dbReference type="BioGRID" id="112382">
    <property type="interactions" value="191"/>
</dbReference>
<dbReference type="ComplexPortal" id="CPX-1159">
    <property type="entry name" value="CPAP-STIL complex"/>
</dbReference>
<dbReference type="CORUM" id="Q15468"/>
<dbReference type="DIP" id="DIP-60580N"/>
<dbReference type="FunCoup" id="Q15468">
    <property type="interactions" value="1299"/>
</dbReference>
<dbReference type="IntAct" id="Q15468">
    <property type="interactions" value="107"/>
</dbReference>
<dbReference type="MINT" id="Q15468"/>
<dbReference type="STRING" id="9606.ENSP00000360944"/>
<dbReference type="GlyGen" id="Q15468">
    <property type="glycosylation" value="2 sites"/>
</dbReference>
<dbReference type="iPTMnet" id="Q15468"/>
<dbReference type="PhosphoSitePlus" id="Q15468"/>
<dbReference type="BioMuta" id="STIL"/>
<dbReference type="DMDM" id="122070597"/>
<dbReference type="jPOST" id="Q15468"/>
<dbReference type="MassIVE" id="Q15468"/>
<dbReference type="PaxDb" id="9606-ENSP00000360944"/>
<dbReference type="PeptideAtlas" id="Q15468"/>
<dbReference type="ProteomicsDB" id="60604">
    <molecule id="Q15468-1"/>
</dbReference>
<dbReference type="ProteomicsDB" id="60605">
    <molecule id="Q15468-2"/>
</dbReference>
<dbReference type="Pumba" id="Q15468"/>
<dbReference type="Antibodypedia" id="53510">
    <property type="antibodies" value="104 antibodies from 18 providers"/>
</dbReference>
<dbReference type="DNASU" id="6491"/>
<dbReference type="Ensembl" id="ENST00000360380.7">
    <molecule id="Q15468-1"/>
    <property type="protein sequence ID" value="ENSP00000353544.3"/>
    <property type="gene ID" value="ENSG00000123473.17"/>
</dbReference>
<dbReference type="Ensembl" id="ENST00000371877.8">
    <molecule id="Q15468-2"/>
    <property type="protein sequence ID" value="ENSP00000360944.3"/>
    <property type="gene ID" value="ENSG00000123473.17"/>
</dbReference>
<dbReference type="GeneID" id="6491"/>
<dbReference type="KEGG" id="hsa:6491"/>
<dbReference type="MANE-Select" id="ENST00000371877.8">
    <molecule id="Q15468-2"/>
    <property type="protein sequence ID" value="ENSP00000360944.3"/>
    <property type="RefSeq nucleotide sequence ID" value="NM_001048166.1"/>
    <property type="RefSeq protein sequence ID" value="NP_001041631.1"/>
</dbReference>
<dbReference type="UCSC" id="uc001crd.2">
    <molecule id="Q15468-1"/>
    <property type="organism name" value="human"/>
</dbReference>
<dbReference type="AGR" id="HGNC:10879"/>
<dbReference type="CTD" id="6491"/>
<dbReference type="DisGeNET" id="6491"/>
<dbReference type="GeneCards" id="STIL"/>
<dbReference type="HGNC" id="HGNC:10879">
    <property type="gene designation" value="STIL"/>
</dbReference>
<dbReference type="HPA" id="ENSG00000123473">
    <property type="expression patterns" value="Tissue enhanced (bone marrow, lymphoid tissue)"/>
</dbReference>
<dbReference type="MalaCards" id="STIL"/>
<dbReference type="MIM" id="181590">
    <property type="type" value="gene"/>
</dbReference>
<dbReference type="MIM" id="612703">
    <property type="type" value="phenotype"/>
</dbReference>
<dbReference type="neXtProt" id="NX_Q15468"/>
<dbReference type="OpenTargets" id="ENSG00000123473"/>
<dbReference type="Orphanet" id="93925">
    <property type="disease" value="Alobar holoprosencephaly"/>
</dbReference>
<dbReference type="Orphanet" id="2512">
    <property type="disease" value="Autosomal recessive primary microcephaly"/>
</dbReference>
<dbReference type="Orphanet" id="93924">
    <property type="disease" value="Lobar holoprosencephaly"/>
</dbReference>
<dbReference type="Orphanet" id="93926">
    <property type="disease" value="Midline interhemispheric variant of holoprosencephaly"/>
</dbReference>
<dbReference type="Orphanet" id="99861">
    <property type="disease" value="Precursor T-cell acute lymphoblastic leukemia"/>
</dbReference>
<dbReference type="Orphanet" id="220386">
    <property type="disease" value="Semilobar holoprosencephaly"/>
</dbReference>
<dbReference type="Orphanet" id="280195">
    <property type="disease" value="Septopreoptic holoprosencephaly"/>
</dbReference>
<dbReference type="PharmGKB" id="PA35780"/>
<dbReference type="VEuPathDB" id="HostDB:ENSG00000123473"/>
<dbReference type="eggNOG" id="ENOG502QVJ5">
    <property type="taxonomic scope" value="Eukaryota"/>
</dbReference>
<dbReference type="GeneTree" id="ENSGT00390000007310"/>
<dbReference type="InParanoid" id="Q15468"/>
<dbReference type="OMA" id="CKCGYLT"/>
<dbReference type="OrthoDB" id="76173at2759"/>
<dbReference type="PAN-GO" id="Q15468">
    <property type="GO annotations" value="6 GO annotations based on evolutionary models"/>
</dbReference>
<dbReference type="PhylomeDB" id="Q15468"/>
<dbReference type="TreeFam" id="TF331178"/>
<dbReference type="PathwayCommons" id="Q15468"/>
<dbReference type="SignaLink" id="Q15468"/>
<dbReference type="SIGNOR" id="Q15468"/>
<dbReference type="BioGRID-ORCS" id="6491">
    <property type="hits" value="479 hits in 1155 CRISPR screens"/>
</dbReference>
<dbReference type="CD-CODE" id="8C2F96ED">
    <property type="entry name" value="Centrosome"/>
</dbReference>
<dbReference type="ChiTaRS" id="STIL">
    <property type="organism name" value="human"/>
</dbReference>
<dbReference type="GeneWiki" id="STIL"/>
<dbReference type="GenomeRNAi" id="6491"/>
<dbReference type="Pharos" id="Q15468">
    <property type="development level" value="Tbio"/>
</dbReference>
<dbReference type="PRO" id="PR:Q15468"/>
<dbReference type="Proteomes" id="UP000005640">
    <property type="component" value="Chromosome 1"/>
</dbReference>
<dbReference type="RNAct" id="Q15468">
    <property type="molecule type" value="protein"/>
</dbReference>
<dbReference type="Bgee" id="ENSG00000123473">
    <property type="expression patterns" value="Expressed in secondary oocyte and 160 other cell types or tissues"/>
</dbReference>
<dbReference type="ExpressionAtlas" id="Q15468">
    <property type="expression patterns" value="baseline and differential"/>
</dbReference>
<dbReference type="GO" id="GO:0005938">
    <property type="term" value="C:cell cortex"/>
    <property type="evidence" value="ECO:0007669"/>
    <property type="project" value="UniProtKB-SubCell"/>
</dbReference>
<dbReference type="GO" id="GO:0005814">
    <property type="term" value="C:centriole"/>
    <property type="evidence" value="ECO:0000314"/>
    <property type="project" value="UniProtKB"/>
</dbReference>
<dbReference type="GO" id="GO:0005813">
    <property type="term" value="C:centrosome"/>
    <property type="evidence" value="ECO:0000314"/>
    <property type="project" value="HPA"/>
</dbReference>
<dbReference type="GO" id="GO:0036064">
    <property type="term" value="C:ciliary basal body"/>
    <property type="evidence" value="ECO:0000314"/>
    <property type="project" value="HPA"/>
</dbReference>
<dbReference type="GO" id="GO:0005737">
    <property type="term" value="C:cytoplasm"/>
    <property type="evidence" value="ECO:0000314"/>
    <property type="project" value="MGI"/>
</dbReference>
<dbReference type="GO" id="GO:0005829">
    <property type="term" value="C:cytosol"/>
    <property type="evidence" value="ECO:0000314"/>
    <property type="project" value="HPA"/>
</dbReference>
<dbReference type="GO" id="GO:0005815">
    <property type="term" value="C:microtubule organizing center"/>
    <property type="evidence" value="ECO:0000318"/>
    <property type="project" value="GO_Central"/>
</dbReference>
<dbReference type="GO" id="GO:0005654">
    <property type="term" value="C:nucleoplasm"/>
    <property type="evidence" value="ECO:0000314"/>
    <property type="project" value="HPA"/>
</dbReference>
<dbReference type="GO" id="GO:0120099">
    <property type="term" value="C:procentriole replication complex"/>
    <property type="evidence" value="ECO:0000353"/>
    <property type="project" value="ComplexPortal"/>
</dbReference>
<dbReference type="GO" id="GO:0042802">
    <property type="term" value="F:identical protein binding"/>
    <property type="evidence" value="ECO:0000353"/>
    <property type="project" value="IntAct"/>
</dbReference>
<dbReference type="GO" id="GO:0051298">
    <property type="term" value="P:centrosome duplication"/>
    <property type="evidence" value="ECO:0000314"/>
    <property type="project" value="MGI"/>
</dbReference>
<dbReference type="GO" id="GO:0007368">
    <property type="term" value="P:determination of left/right symmetry"/>
    <property type="evidence" value="ECO:0000250"/>
    <property type="project" value="BHF-UCL"/>
</dbReference>
<dbReference type="GO" id="GO:0000578">
    <property type="term" value="P:embryonic axis specification"/>
    <property type="evidence" value="ECO:0000250"/>
    <property type="project" value="BHF-UCL"/>
</dbReference>
<dbReference type="GO" id="GO:0033504">
    <property type="term" value="P:floor plate development"/>
    <property type="evidence" value="ECO:0000250"/>
    <property type="project" value="BHF-UCL"/>
</dbReference>
<dbReference type="GO" id="GO:0030900">
    <property type="term" value="P:forebrain development"/>
    <property type="evidence" value="ECO:0000250"/>
    <property type="project" value="BHF-UCL"/>
</dbReference>
<dbReference type="GO" id="GO:0001947">
    <property type="term" value="P:heart looping"/>
    <property type="evidence" value="ECO:0000250"/>
    <property type="project" value="BHF-UCL"/>
</dbReference>
<dbReference type="GO" id="GO:0001701">
    <property type="term" value="P:in utero embryonic development"/>
    <property type="evidence" value="ECO:0000250"/>
    <property type="project" value="BHF-UCL"/>
</dbReference>
<dbReference type="GO" id="GO:0031023">
    <property type="term" value="P:microtubule organizing center organization"/>
    <property type="evidence" value="ECO:0000318"/>
    <property type="project" value="GO_Central"/>
</dbReference>
<dbReference type="GO" id="GO:0007052">
    <property type="term" value="P:mitotic spindle organization"/>
    <property type="evidence" value="ECO:0000315"/>
    <property type="project" value="MGI"/>
</dbReference>
<dbReference type="GO" id="GO:0035264">
    <property type="term" value="P:multicellular organism growth"/>
    <property type="evidence" value="ECO:0000250"/>
    <property type="project" value="BHF-UCL"/>
</dbReference>
<dbReference type="GO" id="GO:0043066">
    <property type="term" value="P:negative regulation of apoptotic process"/>
    <property type="evidence" value="ECO:0000250"/>
    <property type="project" value="BHF-UCL"/>
</dbReference>
<dbReference type="GO" id="GO:0001843">
    <property type="term" value="P:neural tube closure"/>
    <property type="evidence" value="ECO:0000250"/>
    <property type="project" value="BHF-UCL"/>
</dbReference>
<dbReference type="GO" id="GO:0021915">
    <property type="term" value="P:neural tube development"/>
    <property type="evidence" value="ECO:0000250"/>
    <property type="project" value="BHF-UCL"/>
</dbReference>
<dbReference type="GO" id="GO:0030903">
    <property type="term" value="P:notochord development"/>
    <property type="evidence" value="ECO:0000250"/>
    <property type="project" value="BHF-UCL"/>
</dbReference>
<dbReference type="GO" id="GO:0046601">
    <property type="term" value="P:positive regulation of centriole replication"/>
    <property type="evidence" value="ECO:0000314"/>
    <property type="project" value="ComplexPortal"/>
</dbReference>
<dbReference type="GO" id="GO:1900087">
    <property type="term" value="P:positive regulation of G1/S transition of mitotic cell cycle"/>
    <property type="evidence" value="ECO:0000314"/>
    <property type="project" value="ComplexPortal"/>
</dbReference>
<dbReference type="GO" id="GO:1905832">
    <property type="term" value="P:positive regulation of spindle assembly"/>
    <property type="evidence" value="ECO:0000303"/>
    <property type="project" value="ComplexPortal"/>
</dbReference>
<dbReference type="GO" id="GO:0071539">
    <property type="term" value="P:protein localization to centrosome"/>
    <property type="evidence" value="ECO:0000315"/>
    <property type="project" value="MGI"/>
</dbReference>
<dbReference type="GO" id="GO:0046599">
    <property type="term" value="P:regulation of centriole replication"/>
    <property type="evidence" value="ECO:0000315"/>
    <property type="project" value="UniProtKB"/>
</dbReference>
<dbReference type="GO" id="GO:0060236">
    <property type="term" value="P:regulation of mitotic spindle organization"/>
    <property type="evidence" value="ECO:0000303"/>
    <property type="project" value="ComplexPortal"/>
</dbReference>
<dbReference type="GO" id="GO:0007224">
    <property type="term" value="P:smoothened signaling pathway"/>
    <property type="evidence" value="ECO:0000250"/>
    <property type="project" value="BHF-UCL"/>
</dbReference>
<dbReference type="InterPro" id="IPR026123">
    <property type="entry name" value="Sil"/>
</dbReference>
<dbReference type="PANTHER" id="PTHR15128:SF0">
    <property type="entry name" value="SCL-INTERRUPTING LOCUS PROTEIN"/>
    <property type="match status" value="1"/>
</dbReference>
<dbReference type="PANTHER" id="PTHR15128">
    <property type="entry name" value="TAL1 SCL INTERRUPTING LOCUS"/>
    <property type="match status" value="1"/>
</dbReference>
<dbReference type="Pfam" id="PF15253">
    <property type="entry name" value="STIL_N"/>
    <property type="match status" value="1"/>
</dbReference>
<reference key="1">
    <citation type="journal article" date="1991" name="Mol. Cell. Biol.">
        <title>Structural characterization of SIL, a gene frequently disrupted in T-cell acute lymphoblastic leukemia.</title>
        <authorList>
            <person name="Aplan P.D."/>
            <person name="Lombardi D.P."/>
            <person name="Kirsch I.R."/>
        </authorList>
    </citation>
    <scope>NUCLEOTIDE SEQUENCE [MRNA] (ISOFORM 1)</scope>
    <scope>CHROMOSOMAL REARRANGEMENT</scope>
    <scope>TISSUE SPECIFICITY</scope>
    <source>
        <tissue>Bone marrow</tissue>
    </source>
</reference>
<reference key="2">
    <citation type="journal article" date="2002" name="Cytogenet. Genome Res.">
        <title>The genomic structure, chromosomal localization, and analysis of SIL as a candidate gene for holoprosencephaly.</title>
        <authorList>
            <person name="Karkera J.D."/>
            <person name="Izraeli S."/>
            <person name="Roessler E."/>
            <person name="Dutra A."/>
            <person name="Kirsch I.R."/>
            <person name="Muenke M."/>
        </authorList>
    </citation>
    <scope>NUCLEOTIDE SEQUENCE [GENOMIC DNA]</scope>
    <scope>ALTERNATIVE SPLICING (ISOFORM 1)</scope>
    <scope>VARIANTS VAL-86 AND ARG-1012</scope>
</reference>
<reference key="3">
    <citation type="journal article" date="2007" name="BMC Genomics">
        <title>The full-ORF clone resource of the German cDNA consortium.</title>
        <authorList>
            <person name="Bechtel S."/>
            <person name="Rosenfelder H."/>
            <person name="Duda A."/>
            <person name="Schmidt C.P."/>
            <person name="Ernst U."/>
            <person name="Wellenreuther R."/>
            <person name="Mehrle A."/>
            <person name="Schuster C."/>
            <person name="Bahr A."/>
            <person name="Bloecker H."/>
            <person name="Heubner D."/>
            <person name="Hoerlein A."/>
            <person name="Michel G."/>
            <person name="Wedler H."/>
            <person name="Koehrer K."/>
            <person name="Ottenwaelder B."/>
            <person name="Poustka A."/>
            <person name="Wiemann S."/>
            <person name="Schupp I."/>
        </authorList>
    </citation>
    <scope>NUCLEOTIDE SEQUENCE [LARGE SCALE MRNA] (ISOFORM 2)</scope>
    <scope>VARIANTS VAL-86 AND ARG-984</scope>
    <source>
        <tissue>Uterus</tissue>
    </source>
</reference>
<reference key="4">
    <citation type="journal article" date="2006" name="Nature">
        <title>The DNA sequence and biological annotation of human chromosome 1.</title>
        <authorList>
            <person name="Gregory S.G."/>
            <person name="Barlow K.F."/>
            <person name="McLay K.E."/>
            <person name="Kaul R."/>
            <person name="Swarbreck D."/>
            <person name="Dunham A."/>
            <person name="Scott C.E."/>
            <person name="Howe K.L."/>
            <person name="Woodfine K."/>
            <person name="Spencer C.C.A."/>
            <person name="Jones M.C."/>
            <person name="Gillson C."/>
            <person name="Searle S."/>
            <person name="Zhou Y."/>
            <person name="Kokocinski F."/>
            <person name="McDonald L."/>
            <person name="Evans R."/>
            <person name="Phillips K."/>
            <person name="Atkinson A."/>
            <person name="Cooper R."/>
            <person name="Jones C."/>
            <person name="Hall R.E."/>
            <person name="Andrews T.D."/>
            <person name="Lloyd C."/>
            <person name="Ainscough R."/>
            <person name="Almeida J.P."/>
            <person name="Ambrose K.D."/>
            <person name="Anderson F."/>
            <person name="Andrew R.W."/>
            <person name="Ashwell R.I.S."/>
            <person name="Aubin K."/>
            <person name="Babbage A.K."/>
            <person name="Bagguley C.L."/>
            <person name="Bailey J."/>
            <person name="Beasley H."/>
            <person name="Bethel G."/>
            <person name="Bird C.P."/>
            <person name="Bray-Allen S."/>
            <person name="Brown J.Y."/>
            <person name="Brown A.J."/>
            <person name="Buckley D."/>
            <person name="Burton J."/>
            <person name="Bye J."/>
            <person name="Carder C."/>
            <person name="Chapman J.C."/>
            <person name="Clark S.Y."/>
            <person name="Clarke G."/>
            <person name="Clee C."/>
            <person name="Cobley V."/>
            <person name="Collier R.E."/>
            <person name="Corby N."/>
            <person name="Coville G.J."/>
            <person name="Davies J."/>
            <person name="Deadman R."/>
            <person name="Dunn M."/>
            <person name="Earthrowl M."/>
            <person name="Ellington A.G."/>
            <person name="Errington H."/>
            <person name="Frankish A."/>
            <person name="Frankland J."/>
            <person name="French L."/>
            <person name="Garner P."/>
            <person name="Garnett J."/>
            <person name="Gay L."/>
            <person name="Ghori M.R.J."/>
            <person name="Gibson R."/>
            <person name="Gilby L.M."/>
            <person name="Gillett W."/>
            <person name="Glithero R.J."/>
            <person name="Grafham D.V."/>
            <person name="Griffiths C."/>
            <person name="Griffiths-Jones S."/>
            <person name="Grocock R."/>
            <person name="Hammond S."/>
            <person name="Harrison E.S.I."/>
            <person name="Hart E."/>
            <person name="Haugen E."/>
            <person name="Heath P.D."/>
            <person name="Holmes S."/>
            <person name="Holt K."/>
            <person name="Howden P.J."/>
            <person name="Hunt A.R."/>
            <person name="Hunt S.E."/>
            <person name="Hunter G."/>
            <person name="Isherwood J."/>
            <person name="James R."/>
            <person name="Johnson C."/>
            <person name="Johnson D."/>
            <person name="Joy A."/>
            <person name="Kay M."/>
            <person name="Kershaw J.K."/>
            <person name="Kibukawa M."/>
            <person name="Kimberley A.M."/>
            <person name="King A."/>
            <person name="Knights A.J."/>
            <person name="Lad H."/>
            <person name="Laird G."/>
            <person name="Lawlor S."/>
            <person name="Leongamornlert D.A."/>
            <person name="Lloyd D.M."/>
            <person name="Loveland J."/>
            <person name="Lovell J."/>
            <person name="Lush M.J."/>
            <person name="Lyne R."/>
            <person name="Martin S."/>
            <person name="Mashreghi-Mohammadi M."/>
            <person name="Matthews L."/>
            <person name="Matthews N.S.W."/>
            <person name="McLaren S."/>
            <person name="Milne S."/>
            <person name="Mistry S."/>
            <person name="Moore M.J.F."/>
            <person name="Nickerson T."/>
            <person name="O'Dell C.N."/>
            <person name="Oliver K."/>
            <person name="Palmeiri A."/>
            <person name="Palmer S.A."/>
            <person name="Parker A."/>
            <person name="Patel D."/>
            <person name="Pearce A.V."/>
            <person name="Peck A.I."/>
            <person name="Pelan S."/>
            <person name="Phelps K."/>
            <person name="Phillimore B.J."/>
            <person name="Plumb R."/>
            <person name="Rajan J."/>
            <person name="Raymond C."/>
            <person name="Rouse G."/>
            <person name="Saenphimmachak C."/>
            <person name="Sehra H.K."/>
            <person name="Sheridan E."/>
            <person name="Shownkeen R."/>
            <person name="Sims S."/>
            <person name="Skuce C.D."/>
            <person name="Smith M."/>
            <person name="Steward C."/>
            <person name="Subramanian S."/>
            <person name="Sycamore N."/>
            <person name="Tracey A."/>
            <person name="Tromans A."/>
            <person name="Van Helmond Z."/>
            <person name="Wall M."/>
            <person name="Wallis J.M."/>
            <person name="White S."/>
            <person name="Whitehead S.L."/>
            <person name="Wilkinson J.E."/>
            <person name="Willey D.L."/>
            <person name="Williams H."/>
            <person name="Wilming L."/>
            <person name="Wray P.W."/>
            <person name="Wu Z."/>
            <person name="Coulson A."/>
            <person name="Vaudin M."/>
            <person name="Sulston J.E."/>
            <person name="Durbin R.M."/>
            <person name="Hubbard T."/>
            <person name="Wooster R."/>
            <person name="Dunham I."/>
            <person name="Carter N.P."/>
            <person name="McVean G."/>
            <person name="Ross M.T."/>
            <person name="Harrow J."/>
            <person name="Olson M.V."/>
            <person name="Beck S."/>
            <person name="Rogers J."/>
            <person name="Bentley D.R."/>
        </authorList>
    </citation>
    <scope>NUCLEOTIDE SEQUENCE [LARGE SCALE GENOMIC DNA]</scope>
</reference>
<reference key="5">
    <citation type="journal article" date="2004" name="Genome Res.">
        <title>The status, quality, and expansion of the NIH full-length cDNA project: the Mammalian Gene Collection (MGC).</title>
        <authorList>
            <consortium name="The MGC Project Team"/>
        </authorList>
    </citation>
    <scope>NUCLEOTIDE SEQUENCE [LARGE SCALE MRNA]</scope>
</reference>
<reference key="6">
    <citation type="journal article" date="1990" name="EMBO J.">
        <title>Site-specific recombination of the tal-1 gene is a common occurrence in human T cell leukemia.</title>
        <authorList>
            <person name="Brown L."/>
            <person name="Cheng J.-T."/>
            <person name="Chen Q."/>
            <person name="Siciliano M.J."/>
            <person name="Crist W."/>
            <person name="Buchanan G."/>
            <person name="Baer R."/>
        </authorList>
    </citation>
    <scope>CHROMOSOMAL REARRANGEMENT</scope>
</reference>
<reference key="7">
    <citation type="journal article" date="1990" name="Science">
        <title>Disruption of the human SCL locus by 'illegitimate' V-(D)-J recombinase activity.</title>
        <authorList>
            <person name="Aplan P.D."/>
            <person name="Lombardi D.P."/>
            <person name="Ginsberg A.M."/>
            <person name="Cossman J."/>
            <person name="Bertness V.L."/>
            <person name="Kirsch I.R."/>
        </authorList>
    </citation>
    <scope>CHROMOSOMAL REARRANGEMENT</scope>
</reference>
<reference key="8">
    <citation type="journal article" date="1992" name="Blood">
        <title>Involvement of the putative hematopoietic transcription factor SCL in T-cell acute lymphoblastic leukemia.</title>
        <authorList>
            <person name="Aplan P.D."/>
            <person name="Lombardi D.P."/>
            <person name="Reaman G.H."/>
            <person name="Sather H.N."/>
            <person name="Hammond G.D."/>
            <person name="Kirsch I.R."/>
        </authorList>
    </citation>
    <scope>CHROMOSOMAL REARRANGEMENT</scope>
</reference>
<reference key="9">
    <citation type="journal article" date="1997" name="Cell Growth Differ.">
        <title>Expression of the SIL gene is correlated with growth induction and cellular proliferation.</title>
        <authorList>
            <person name="Izraeli S."/>
            <person name="Colaizzo-Anas T."/>
            <person name="Bertness V.L."/>
            <person name="Mani K."/>
            <person name="Aplan P.D."/>
            <person name="Kirsch I.R."/>
        </authorList>
    </citation>
    <scope>FUNCTION</scope>
    <scope>INDUCTION</scope>
</reference>
<reference key="10">
    <citation type="journal article" date="2001" name="J. Biol. Chem.">
        <title>Analysis of the V(D)J recombination efficiency at lymphoid chromosomal translocation breakpoints.</title>
        <authorList>
            <person name="Raghavan S.C."/>
            <person name="Kirsch I.R."/>
            <person name="Lieber M.R."/>
        </authorList>
    </citation>
    <scope>CHROMOSOMAL REARRANGEMENT</scope>
</reference>
<reference key="11">
    <citation type="journal article" date="2003" name="Leuk. Res.">
        <title>Measurement of SIL-TAL1 fusion gene transcripts associated with human T-cell lymphocytic leukemia by real-time reverse transcriptase-PCR.</title>
        <authorList>
            <person name="Curry J.D."/>
            <person name="Smith M.T."/>
        </authorList>
    </citation>
    <scope>CHROMOSOMAL REARRANGEMENT</scope>
</reference>
<reference key="12">
    <citation type="journal article" date="2004" name="Blood">
        <title>Clinical significance of HOX11L2 expression linked to t(5;14)(q35;q32), of HOX11 expression, and of SIL-TAL fusion in childhood T-cell malignancies: results of EORTC studies 58881 and 58951.</title>
        <authorList>
            <person name="Cave H."/>
            <person name="Suciu S."/>
            <person name="Preudhomme C."/>
            <person name="Poppe B."/>
            <person name="Robert A."/>
            <person name="Uyttebroeck A."/>
            <person name="Malet M."/>
            <person name="Boutard P."/>
            <person name="Benoit Y."/>
            <person name="Mauvieux L."/>
            <person name="Lutz P."/>
            <person name="Mechinaud F."/>
            <person name="Grardel N."/>
            <person name="Mazingue F."/>
            <person name="Dupont M."/>
            <person name="Margueritte G."/>
            <person name="Pages M.-P."/>
            <person name="Bertrand Y."/>
            <person name="Plouvier E."/>
            <person name="Brunie G."/>
            <person name="Bastard C."/>
            <person name="Plantaz D."/>
            <person name="Vande Velde I."/>
            <person name="Hagemeijer A."/>
            <person name="Speleman F."/>
            <person name="Lessard M."/>
            <person name="Otten J."/>
            <person name="Vilmer E."/>
            <person name="Dastugue N."/>
        </authorList>
    </citation>
    <scope>CHROMOSOMAL REARRANGEMENT</scope>
</reference>
<reference key="13">
    <citation type="journal article" date="2004" name="Oncogene">
        <title>Sil overexpression in lung cancer characterizes tumors with increased mitotic activity.</title>
        <authorList>
            <person name="Erez A."/>
            <person name="Perelman M."/>
            <person name="Hewitt S.M."/>
            <person name="Cojacaru G."/>
            <person name="Goldberg I."/>
            <person name="Shahar I."/>
            <person name="Yaron P."/>
            <person name="Muler I."/>
            <person name="Campaner S."/>
            <person name="Amariglio N."/>
            <person name="Rechavi G."/>
            <person name="Kirsch I.R."/>
            <person name="Krupsky M."/>
            <person name="Kaminski N."/>
            <person name="Izraeli S."/>
        </authorList>
    </citation>
    <scope>TISSUE SPECIFICITY</scope>
</reference>
<reference key="14">
    <citation type="journal article" date="2005" name="Mol. Cell. Biol.">
        <title>Sil phosphorylation in a Pin1 binding domain affects the duration of the spindle checkpoint.</title>
        <authorList>
            <person name="Campaner S."/>
            <person name="Kaldis P."/>
            <person name="Izraeli S."/>
            <person name="Kirsch I.R."/>
        </authorList>
    </citation>
    <scope>FUNCTION</scope>
    <scope>PHOSPHORYLATION</scope>
</reference>
<reference key="15">
    <citation type="journal article" date="2008" name="Proc. Natl. Acad. Sci. U.S.A.">
        <title>A quantitative atlas of mitotic phosphorylation.</title>
        <authorList>
            <person name="Dephoure N."/>
            <person name="Zhou C."/>
            <person name="Villen J."/>
            <person name="Beausoleil S.A."/>
            <person name="Bakalarski C.E."/>
            <person name="Elledge S.J."/>
            <person name="Gygi S.P."/>
        </authorList>
    </citation>
    <scope>PHOSPHORYLATION [LARGE SCALE ANALYSIS] AT SER-753</scope>
    <scope>IDENTIFICATION BY MASS SPECTROMETRY [LARGE SCALE ANALYSIS]</scope>
    <source>
        <tissue>Cervix carcinoma</tissue>
    </source>
</reference>
<reference key="16">
    <citation type="journal article" date="2009" name="Am. J. Hum. Genet.">
        <title>Mutations in STIL, encoding a pericentriolar and centrosomal protein, cause primary microcephaly.</title>
        <authorList>
            <person name="Kumar A."/>
            <person name="Girimaji S.C."/>
            <person name="Duvvari M.R."/>
            <person name="Blanton S.H."/>
        </authorList>
    </citation>
    <scope>INVOLVEMENT IN MCPH7</scope>
</reference>
<reference key="17">
    <citation type="journal article" date="2009" name="Sci. Signal.">
        <title>Quantitative phosphoproteomic analysis of T cell receptor signaling reveals system-wide modulation of protein-protein interactions.</title>
        <authorList>
            <person name="Mayya V."/>
            <person name="Lundgren D.H."/>
            <person name="Hwang S.-I."/>
            <person name="Rezaul K."/>
            <person name="Wu L."/>
            <person name="Eng J.K."/>
            <person name="Rodionov V."/>
            <person name="Han D.K."/>
        </authorList>
    </citation>
    <scope>PHOSPHORYLATION [LARGE SCALE ANALYSIS] AT SER-1135</scope>
    <scope>IDENTIFICATION BY MASS SPECTROMETRY [LARGE SCALE ANALYSIS]</scope>
    <source>
        <tissue>Leukemic T-cell</tissue>
    </source>
</reference>
<reference key="18">
    <citation type="journal article" date="2011" name="EMBO J.">
        <title>The human microcephaly protein STIL interacts with CPAP and is required for procentriole formation.</title>
        <authorList>
            <person name="Tang C.J."/>
            <person name="Lin S.Y."/>
            <person name="Hsu W.B."/>
            <person name="Lin Y.N."/>
            <person name="Wu C.T."/>
            <person name="Lin Y.C."/>
            <person name="Chang C.W."/>
            <person name="Wu K.S."/>
            <person name="Tang T.K."/>
        </authorList>
    </citation>
    <scope>FUNCTION</scope>
    <scope>SUBUNIT</scope>
    <scope>SUBCELLULAR LOCATION</scope>
    <scope>INTERACTION WITH CPAP</scope>
    <scope>FORMATION OF A COMPLEX WITH CPAP AND SASS6</scope>
    <scope>UBIQUITINATION</scope>
</reference>
<reference key="19">
    <citation type="journal article" date="2012" name="Proc. Natl. Acad. Sci. U.S.A.">
        <title>N-terminal acetylome analyses and functional insights of the N-terminal acetyltransferase NatB.</title>
        <authorList>
            <person name="Van Damme P."/>
            <person name="Lasa M."/>
            <person name="Polevoda B."/>
            <person name="Gazquez C."/>
            <person name="Elosegui-Artola A."/>
            <person name="Kim D.S."/>
            <person name="De Juan-Pardo E."/>
            <person name="Demeyer K."/>
            <person name="Hole K."/>
            <person name="Larrea E."/>
            <person name="Timmerman E."/>
            <person name="Prieto J."/>
            <person name="Arnesen T."/>
            <person name="Sherman F."/>
            <person name="Gevaert K."/>
            <person name="Aldabe R."/>
        </authorList>
    </citation>
    <scope>ACETYLATION [LARGE SCALE ANALYSIS] AT MET-1</scope>
    <scope>IDENTIFICATION BY MASS SPECTROMETRY [LARGE SCALE ANALYSIS]</scope>
</reference>
<reference key="20">
    <citation type="journal article" date="2013" name="J. Proteome Res.">
        <title>Toward a comprehensive characterization of a human cancer cell phosphoproteome.</title>
        <authorList>
            <person name="Zhou H."/>
            <person name="Di Palma S."/>
            <person name="Preisinger C."/>
            <person name="Peng M."/>
            <person name="Polat A.N."/>
            <person name="Heck A.J."/>
            <person name="Mohammed S."/>
        </authorList>
    </citation>
    <scope>PHOSPHORYLATION [LARGE SCALE ANALYSIS] AT SER-395; SER-779 AND SER-1135</scope>
    <scope>IDENTIFICATION BY MASS SPECTROMETRY [LARGE SCALE ANALYSIS]</scope>
    <source>
        <tissue>Cervix carcinoma</tissue>
        <tissue>Erythroleukemia</tissue>
    </source>
</reference>
<reference key="21">
    <citation type="journal article" date="2015" name="EMBO J.">
        <title>RBM14 prevents assembly of centriolar protein complexes and maintains mitotic spindle integrity.</title>
        <authorList>
            <person name="Shiratsuchi G."/>
            <person name="Takaoka K."/>
            <person name="Ashikawa T."/>
            <person name="Hamada H."/>
            <person name="Kitagawa D."/>
        </authorList>
    </citation>
    <scope>SUBCELLULAR LOCATION</scope>
    <scope>INTERACTION WITH RBM14 AND CPAP</scope>
</reference>
<reference key="22">
    <citation type="journal article" date="2018" name="Nat. Commun.">
        <title>Direct binding of CEP85 to STIL ensures robust PLK4 activation and efficient centriole assembly.</title>
        <authorList>
            <person name="Liu Y."/>
            <person name="Gupta G.D."/>
            <person name="Barnabas D.D."/>
            <person name="Agircan F.G."/>
            <person name="Mehmood S."/>
            <person name="Wu D."/>
            <person name="Coyaud E."/>
            <person name="Johnson C.M."/>
            <person name="McLaughlin S.H."/>
            <person name="Andreeva A."/>
            <person name="Freund S.M.V."/>
            <person name="Robinson C.V."/>
            <person name="Cheung S.W.T."/>
            <person name="Raught B."/>
            <person name="Pelletier L."/>
            <person name="van Breugel M."/>
        </authorList>
    </citation>
    <scope>FUNCTION</scope>
    <scope>SUBCELLULAR LOCATION</scope>
    <scope>MUTAGENESIS OF LEU-64 AND ARG-67</scope>
    <scope>INTERACTION WITH CEP85</scope>
</reference>
<reference key="23">
    <citation type="journal article" date="2020" name="J. Cell Sci.">
        <title>Direct interaction between CEP85 and STIL mediates PLK4-driven directed cell migration.</title>
        <authorList>
            <person name="Liu Y."/>
            <person name="Kim J."/>
            <person name="Philip R."/>
            <person name="Sridhar V."/>
            <person name="Chandrashekhar M."/>
            <person name="Moffat J."/>
            <person name="van Breugel M."/>
            <person name="Pelletier L."/>
        </authorList>
    </citation>
    <scope>FUNCTION</scope>
    <scope>SUBCELLULAR LOCATION</scope>
    <scope>INTERACTION WITH CEP85</scope>
</reference>
<reference key="24">
    <citation type="journal article" date="2013" name="Clin. Genet.">
        <title>Investigation of primary microcephaly in Bushehr province of Iran: novel STIL and ASPM mutations.</title>
        <authorList>
            <person name="Papari E."/>
            <person name="Bastami M."/>
            <person name="Farhadi A."/>
            <person name="Abedini S.S."/>
            <person name="Hosseini M."/>
            <person name="Bahman I."/>
            <person name="Mohseni M."/>
            <person name="Garshasbi M."/>
            <person name="Moheb L.A."/>
            <person name="Behjati F."/>
            <person name="Kahrizi K."/>
            <person name="Ropers H.H."/>
            <person name="Najmabadi H."/>
        </authorList>
    </citation>
    <scope>VARIANT MCPH7 TRP-798</scope>
</reference>
<proteinExistence type="evidence at protein level"/>
<evidence type="ECO:0000250" key="1"/>
<evidence type="ECO:0000250" key="2">
    <source>
        <dbReference type="UniProtKB" id="Q60988"/>
    </source>
</evidence>
<evidence type="ECO:0000256" key="3">
    <source>
        <dbReference type="SAM" id="MobiDB-lite"/>
    </source>
</evidence>
<evidence type="ECO:0000269" key="4">
    <source>
    </source>
</evidence>
<evidence type="ECO:0000269" key="5">
    <source>
    </source>
</evidence>
<evidence type="ECO:0000269" key="6">
    <source>
    </source>
</evidence>
<evidence type="ECO:0000269" key="7">
    <source>
    </source>
</evidence>
<evidence type="ECO:0000269" key="8">
    <source>
    </source>
</evidence>
<evidence type="ECO:0000269" key="9">
    <source>
    </source>
</evidence>
<evidence type="ECO:0000269" key="10">
    <source>
    </source>
</evidence>
<evidence type="ECO:0000269" key="11">
    <source>
    </source>
</evidence>
<evidence type="ECO:0000269" key="12">
    <source>
    </source>
</evidence>
<evidence type="ECO:0000269" key="13">
    <source>
    </source>
</evidence>
<evidence type="ECO:0000269" key="14">
    <source>
    </source>
</evidence>
<evidence type="ECO:0000269" key="15">
    <source>
    </source>
</evidence>
<evidence type="ECO:0000269" key="16">
    <source>
    </source>
</evidence>
<evidence type="ECO:0000269" key="17">
    <source>
    </source>
</evidence>
<evidence type="ECO:0000269" key="18">
    <source>
    </source>
</evidence>
<evidence type="ECO:0000269" key="19">
    <source>
    </source>
</evidence>
<evidence type="ECO:0000269" key="20">
    <source>
    </source>
</evidence>
<evidence type="ECO:0000269" key="21">
    <source>
    </source>
</evidence>
<evidence type="ECO:0000303" key="22">
    <source>
    </source>
</evidence>
<evidence type="ECO:0000305" key="23"/>
<evidence type="ECO:0007744" key="24">
    <source>
    </source>
</evidence>
<evidence type="ECO:0007744" key="25">
    <source>
    </source>
</evidence>
<evidence type="ECO:0007744" key="26">
    <source>
    </source>
</evidence>
<evidence type="ECO:0007744" key="27">
    <source>
    </source>
</evidence>
<evidence type="ECO:0007829" key="28">
    <source>
        <dbReference type="PDB" id="5LHW"/>
    </source>
</evidence>
<keyword id="KW-0002">3D-structure</keyword>
<keyword id="KW-0007">Acetylation</keyword>
<keyword id="KW-0025">Alternative splicing</keyword>
<keyword id="KW-0160">Chromosomal rearrangement</keyword>
<keyword id="KW-0963">Cytoplasm</keyword>
<keyword id="KW-0206">Cytoskeleton</keyword>
<keyword id="KW-0217">Developmental protein</keyword>
<keyword id="KW-0225">Disease variant</keyword>
<keyword id="KW-0991">Intellectual disability</keyword>
<keyword id="KW-0597">Phosphoprotein</keyword>
<keyword id="KW-0905">Primary microcephaly</keyword>
<keyword id="KW-1267">Proteomics identification</keyword>
<keyword id="KW-0656">Proto-oncogene</keyword>
<keyword id="KW-1185">Reference proteome</keyword>
<keyword id="KW-0832">Ubl conjugation</keyword>
<name>STIL_HUMAN</name>
<comment type="function">
    <text evidence="10 14 19 20 21">Immediate-early gene. Plays an important role in embryonic development as well as in cellular growth and proliferation; its long-term silencing affects cell survival and cell cycle distribution as well as decreases CDK1 activity correlated with reduced phosphorylation of CDK1. Plays a role as a positive regulator of the sonic hedgehog pathway, acting downstream of PTCH1 (PubMed:16024801, PubMed:9372240). Plays an important role in the regulation of centriole duplication. Required for the onset of procentriole formation and proper mitotic progression. During procentriole formation, is essential for the correct loading of SASS6 and CPAP to the base of the procentriole to initiate procentriole assembly (PubMed:22020124). In complex with STIL acts as a modulator of PLK4-driven cytoskeletal rearrangements and directional cell motility (PubMed:29712910, PubMed:32107292).</text>
</comment>
<comment type="subunit">
    <text evidence="2 14 18 19">Homodimer (PubMed:22020124). Interacts with PIN1 via its WW domain. This interaction is dependent on STIL mitotic phosphorylation (By similarity). Interacts with CPAP (PubMed:22020124, PubMed:25385835). Interacts with RBM14 and this interaction interferes with the interaction of STIL with CPAP (PubMed:25385835). Forms a complex with CPAP and SASS6 (PubMed:22020124). Interacts (via N-terminus) with CEP85; this interaction is essential for efficient centriolar targeting of STIL and subsequent PLK4 activation (PubMed:29712910).</text>
</comment>
<comment type="interaction">
    <interactant intactId="EBI-7488405">
        <id>Q15468</id>
    </interactant>
    <interactant intactId="EBI-946194">
        <id>Q9HC77</id>
        <label>CENPJ</label>
    </interactant>
    <organismsDiffer>false</organismsDiffer>
    <experiments>15</experiments>
</comment>
<comment type="interaction">
    <interactant intactId="EBI-7488405">
        <id>Q15468</id>
    </interactant>
    <interactant intactId="EBI-746202">
        <id>O00444</id>
        <label>PLK4</label>
    </interactant>
    <organismsDiffer>false</organismsDiffer>
    <experiments>11</experiments>
</comment>
<comment type="interaction">
    <interactant intactId="EBI-7488405">
        <id>Q15468</id>
    </interactant>
    <interactant intactId="EBI-1570153">
        <id>Q6UVJ0</id>
        <label>SASS6</label>
    </interactant>
    <organismsDiffer>false</organismsDiffer>
    <experiments>4</experiments>
</comment>
<comment type="interaction">
    <interactant intactId="EBI-7488405">
        <id>Q15468</id>
    </interactant>
    <interactant intactId="EBI-7488405">
        <id>Q15468</id>
        <label>STIL</label>
    </interactant>
    <organismsDiffer>false</organismsDiffer>
    <experiments>4</experiments>
</comment>
<comment type="subcellular location">
    <subcellularLocation>
        <location evidence="2">Cytoplasm</location>
        <location evidence="2">Cytosol</location>
    </subcellularLocation>
    <subcellularLocation>
        <location evidence="14 18 19">Cytoplasm</location>
        <location evidence="14 18 19">Cytoskeleton</location>
        <location evidence="14 18 19">Microtubule organizing center</location>
        <location evidence="14 18 19">Centrosome</location>
        <location evidence="14 18 19">Centriole</location>
    </subcellularLocation>
    <subcellularLocation>
        <location evidence="20">Cytoplasm</location>
        <location evidence="20">Cell cortex</location>
    </subcellularLocation>
    <text evidence="20">Localizes at the leading edge.</text>
</comment>
<comment type="alternative products">
    <event type="alternative splicing"/>
    <isoform>
        <id>Q15468-1</id>
        <name>1</name>
        <sequence type="displayed"/>
    </isoform>
    <isoform>
        <id>Q15468-2</id>
        <name>2</name>
        <sequence type="described" ref="VSP_022301"/>
    </isoform>
</comment>
<comment type="tissue specificity">
    <text evidence="9 13">Expressed in all hematopoietic tissues and cell lines. Highly expressed in a variety of tumors characterized by increased mitotic activity with highest expression in lung cancer.</text>
</comment>
<comment type="induction">
    <text evidence="21">Down-regulated when cell proliferation ceased. Accumulates during G2 phase and falls at completion of the cell cycle.</text>
</comment>
<comment type="PTM">
    <text evidence="14">Ubiquitinated.</text>
</comment>
<comment type="PTM">
    <text evidence="10">Phosphorylated following the activation of the mitotic checkpoint.</text>
</comment>
<comment type="disease">
    <text evidence="4 6 7 8 13 15 16">A chromosomal aberration involving STIL may be a cause of some T-cell acute lymphoblastic leukemias (T-ALL). A deletion at 1p32 between STIL and TAL1 genes leads to STIL/TAL1 fusion mRNA with STIL exon 1 splicing to TAL1 exon 3. As both STIL exon 1 and TAL1 exon 3 are 5'-untranslated exons, STIL/TAL1 fusion mRNA predicts a full-length TAL1 protein under the control of the STIL promoter, leading to inappropriate TAL1 expression. In childhood T-cell malignancies (T-ALL), a type of defect such as STIL/TAL1 fusion is associated with a good prognosis. In cultured lymphocytes from healthy adults, STIL/TAL1 fusion mRNA may be detected after 7 days of culture.</text>
</comment>
<comment type="disease" evidence="12 17">
    <disease id="DI-00753">
        <name>Microcephaly 7, primary, autosomal recessive</name>
        <acronym>MCPH7</acronym>
        <description>A disease defined as a head circumference more than 3 standard deviations below the age-related mean. Brain weight is markedly reduced and the cerebral cortex is disproportionately small. Despite this marked reduction in size, the gyral pattern is relatively well preserved, with no major abnormality in cortical architecture. Affected individuals have mild to severe intellectual disability. Primary microcephaly is further defined by the absence of other syndromic features or significant neurological deficits due to degenerative brain disorder.</description>
        <dbReference type="MIM" id="612703"/>
    </disease>
    <text>The disease is caused by variants affecting the gene represented in this entry.</text>
</comment>
<comment type="online information" name="Atlas of Genetics and Cytogenetics in Oncology and Haematology">
    <link uri="https://atlasgeneticsoncology.org/gene/524/SIL"/>
</comment>
<organism>
    <name type="scientific">Homo sapiens</name>
    <name type="common">Human</name>
    <dbReference type="NCBI Taxonomy" id="9606"/>
    <lineage>
        <taxon>Eukaryota</taxon>
        <taxon>Metazoa</taxon>
        <taxon>Chordata</taxon>
        <taxon>Craniata</taxon>
        <taxon>Vertebrata</taxon>
        <taxon>Euteleostomi</taxon>
        <taxon>Mammalia</taxon>
        <taxon>Eutheria</taxon>
        <taxon>Euarchontoglires</taxon>
        <taxon>Primates</taxon>
        <taxon>Haplorrhini</taxon>
        <taxon>Catarrhini</taxon>
        <taxon>Hominidae</taxon>
        <taxon>Homo</taxon>
    </lineage>
</organism>
<accession>Q15468</accession>
<accession>Q5T0C5</accession>
<accession>Q68CN9</accession>
<gene>
    <name type="primary">STIL</name>
    <name type="synonym">SIL</name>
</gene>
<feature type="chain" id="PRO_0000271332" description="SCL-interrupting locus protein">
    <location>
        <begin position="1"/>
        <end position="1287"/>
    </location>
</feature>
<feature type="region of interest" description="Interaction with RBM14" evidence="18">
    <location>
        <begin position="1"/>
        <end position="1018"/>
    </location>
</feature>
<feature type="region of interest" description="Interaction with CPAP" evidence="14 18">
    <location>
        <begin position="231"/>
        <end position="781"/>
    </location>
</feature>
<feature type="region of interest" description="Disordered" evidence="3">
    <location>
        <begin position="378"/>
        <end position="417"/>
    </location>
</feature>
<feature type="region of interest" description="Disordered" evidence="3">
    <location>
        <begin position="508"/>
        <end position="533"/>
    </location>
</feature>
<feature type="region of interest" description="PIN1-binding" evidence="1">
    <location>
        <begin position="584"/>
        <end position="779"/>
    </location>
</feature>
<feature type="compositionally biased region" description="Polar residues" evidence="3">
    <location>
        <begin position="517"/>
        <end position="529"/>
    </location>
</feature>
<feature type="modified residue" description="N-acetylmethionine" evidence="26">
    <location>
        <position position="1"/>
    </location>
</feature>
<feature type="modified residue" description="Phosphoserine" evidence="27">
    <location>
        <position position="395"/>
    </location>
</feature>
<feature type="modified residue" description="Phosphoserine" evidence="24">
    <location>
        <position position="753"/>
    </location>
</feature>
<feature type="modified residue" description="Phosphoserine" evidence="27">
    <location>
        <position position="779"/>
    </location>
</feature>
<feature type="modified residue" description="Phosphoserine" evidence="25 27">
    <location>
        <position position="1135"/>
    </location>
</feature>
<feature type="splice variant" id="VSP_022301" description="In isoform 2." evidence="22">
    <original>N</original>
    <variation>NS</variation>
    <location>
        <position position="872"/>
    </location>
</feature>
<feature type="sequence variant" id="VAR_029870" description="In dbSNP:rs3125630." evidence="5 11">
    <original>A</original>
    <variation>V</variation>
    <location>
        <position position="86"/>
    </location>
</feature>
<feature type="sequence variant" id="VAR_072404" description="In MCPH7; dbSNP:rs398122976." evidence="17">
    <original>L</original>
    <variation>W</variation>
    <location>
        <position position="798"/>
    </location>
</feature>
<feature type="sequence variant" id="VAR_029871" description="In dbSNP:rs13376679." evidence="11">
    <original>H</original>
    <variation>R</variation>
    <location>
        <position position="984"/>
    </location>
</feature>
<feature type="sequence variant" id="VAR_029872" evidence="5">
    <original>P</original>
    <variation>R</variation>
    <location>
        <position position="1012"/>
    </location>
</feature>
<feature type="sequence variant" id="VAR_051386" description="In dbSNP:rs3766317.">
    <original>A</original>
    <variation>V</variation>
    <location>
        <position position="1145"/>
    </location>
</feature>
<feature type="mutagenesis site" description="Reduced centriole localization; when associated with 67-A. Does not fully rescue the centriole duplication defect in STIL depleted cells." evidence="19">
    <original>L</original>
    <variation>A</variation>
    <location>
        <position position="64"/>
    </location>
</feature>
<feature type="mutagenesis site" description="Reduced centriole localization; when associated with 64-A. Does not fully rescue the centriole duplication defect in STIL depleted cells." evidence="19">
    <original>R</original>
    <variation>A</variation>
    <location>
        <position position="67"/>
    </location>
</feature>
<feature type="sequence conflict" description="In Ref. 1; AAA60550 and 2; AAK51418." evidence="23" ref="1 2">
    <original>KQ</original>
    <variation>NE</variation>
    <location>
        <begin position="70"/>
        <end position="71"/>
    </location>
</feature>
<feature type="helix" evidence="28">
    <location>
        <begin position="726"/>
        <end position="746"/>
    </location>
</feature>
<protein>
    <recommendedName>
        <fullName>SCL-interrupting locus protein</fullName>
    </recommendedName>
    <alternativeName>
        <fullName>TAL-1-interrupting locus protein</fullName>
    </alternativeName>
</protein>